<keyword id="KW-0474">Menaquinone biosynthesis</keyword>
<keyword id="KW-0489">Methyltransferase</keyword>
<keyword id="KW-0949">S-adenosyl-L-methionine</keyword>
<keyword id="KW-0808">Transferase</keyword>
<keyword id="KW-0831">Ubiquinone biosynthesis</keyword>
<name>UBIE_BURTA</name>
<protein>
    <recommendedName>
        <fullName evidence="1">Ubiquinone/menaquinone biosynthesis C-methyltransferase UbiE</fullName>
        <ecNumber evidence="1">2.1.1.163</ecNumber>
        <ecNumber evidence="1">2.1.1.201</ecNumber>
    </recommendedName>
    <alternativeName>
        <fullName evidence="1">2-methoxy-6-polyprenyl-1,4-benzoquinol methylase</fullName>
    </alternativeName>
    <alternativeName>
        <fullName evidence="1">Demethylmenaquinone methyltransferase</fullName>
    </alternativeName>
</protein>
<organism>
    <name type="scientific">Burkholderia thailandensis (strain ATCC 700388 / DSM 13276 / CCUG 48851 / CIP 106301 / E264)</name>
    <dbReference type="NCBI Taxonomy" id="271848"/>
    <lineage>
        <taxon>Bacteria</taxon>
        <taxon>Pseudomonadati</taxon>
        <taxon>Pseudomonadota</taxon>
        <taxon>Betaproteobacteria</taxon>
        <taxon>Burkholderiales</taxon>
        <taxon>Burkholderiaceae</taxon>
        <taxon>Burkholderia</taxon>
        <taxon>pseudomallei group</taxon>
    </lineage>
</organism>
<sequence>MSKTHFGFETVEENEKAKKVAGVFHSVASNYDLMNDLMSAGLHRAWKAFTIAQANVRPGGKVLDIAAGTGDLTKAFAKAAGPTGEVWHTDINESMLRVGRDRLLDKGVVTPSLLCDAEKLPFPDNYFDVVTVAFGLRNMTHKDSALAEMRRVAKPGGRVMVLEFSKVWEPLKKAYDVYSFKVLPWLGDKFAKDADSYRYLAESIRMHPDQETLKTMMEQAGLDAVKYYNLSGGVVALHVGTKY</sequence>
<dbReference type="EC" id="2.1.1.163" evidence="1"/>
<dbReference type="EC" id="2.1.1.201" evidence="1"/>
<dbReference type="EMBL" id="CP000086">
    <property type="protein sequence ID" value="ABC39053.1"/>
    <property type="molecule type" value="Genomic_DNA"/>
</dbReference>
<dbReference type="RefSeq" id="WP_004189973.1">
    <property type="nucleotide sequence ID" value="NZ_CP008785.1"/>
</dbReference>
<dbReference type="SMR" id="Q2T139"/>
<dbReference type="GeneID" id="93059149"/>
<dbReference type="KEGG" id="bte:BTH_I0553"/>
<dbReference type="HOGENOM" id="CLU_037990_0_0_4"/>
<dbReference type="UniPathway" id="UPA00079">
    <property type="reaction ID" value="UER00169"/>
</dbReference>
<dbReference type="UniPathway" id="UPA00232"/>
<dbReference type="Proteomes" id="UP000001930">
    <property type="component" value="Chromosome I"/>
</dbReference>
<dbReference type="GO" id="GO:0008425">
    <property type="term" value="F:2-methoxy-6-polyprenyl-1,4-benzoquinol methyltransferase activity"/>
    <property type="evidence" value="ECO:0007669"/>
    <property type="project" value="UniProtKB-UniRule"/>
</dbReference>
<dbReference type="GO" id="GO:0043770">
    <property type="term" value="F:demethylmenaquinone methyltransferase activity"/>
    <property type="evidence" value="ECO:0007669"/>
    <property type="project" value="UniProtKB-UniRule"/>
</dbReference>
<dbReference type="GO" id="GO:0009060">
    <property type="term" value="P:aerobic respiration"/>
    <property type="evidence" value="ECO:0007669"/>
    <property type="project" value="UniProtKB-UniRule"/>
</dbReference>
<dbReference type="GO" id="GO:0009234">
    <property type="term" value="P:menaquinone biosynthetic process"/>
    <property type="evidence" value="ECO:0007669"/>
    <property type="project" value="UniProtKB-UniRule"/>
</dbReference>
<dbReference type="GO" id="GO:0032259">
    <property type="term" value="P:methylation"/>
    <property type="evidence" value="ECO:0007669"/>
    <property type="project" value="UniProtKB-KW"/>
</dbReference>
<dbReference type="CDD" id="cd02440">
    <property type="entry name" value="AdoMet_MTases"/>
    <property type="match status" value="1"/>
</dbReference>
<dbReference type="Gene3D" id="3.40.50.150">
    <property type="entry name" value="Vaccinia Virus protein VP39"/>
    <property type="match status" value="1"/>
</dbReference>
<dbReference type="HAMAP" id="MF_01813">
    <property type="entry name" value="MenG_UbiE_methyltr"/>
    <property type="match status" value="1"/>
</dbReference>
<dbReference type="InterPro" id="IPR029063">
    <property type="entry name" value="SAM-dependent_MTases_sf"/>
</dbReference>
<dbReference type="InterPro" id="IPR004033">
    <property type="entry name" value="UbiE/COQ5_MeTrFase"/>
</dbReference>
<dbReference type="InterPro" id="IPR023576">
    <property type="entry name" value="UbiE/COQ5_MeTrFase_CS"/>
</dbReference>
<dbReference type="NCBIfam" id="TIGR01934">
    <property type="entry name" value="MenG_MenH_UbiE"/>
    <property type="match status" value="1"/>
</dbReference>
<dbReference type="NCBIfam" id="NF001240">
    <property type="entry name" value="PRK00216.1-1"/>
    <property type="match status" value="1"/>
</dbReference>
<dbReference type="NCBIfam" id="NF001244">
    <property type="entry name" value="PRK00216.1-5"/>
    <property type="match status" value="1"/>
</dbReference>
<dbReference type="PANTHER" id="PTHR43591:SF24">
    <property type="entry name" value="2-METHOXY-6-POLYPRENYL-1,4-BENZOQUINOL METHYLASE, MITOCHONDRIAL"/>
    <property type="match status" value="1"/>
</dbReference>
<dbReference type="PANTHER" id="PTHR43591">
    <property type="entry name" value="METHYLTRANSFERASE"/>
    <property type="match status" value="1"/>
</dbReference>
<dbReference type="Pfam" id="PF01209">
    <property type="entry name" value="Ubie_methyltran"/>
    <property type="match status" value="1"/>
</dbReference>
<dbReference type="SUPFAM" id="SSF53335">
    <property type="entry name" value="S-adenosyl-L-methionine-dependent methyltransferases"/>
    <property type="match status" value="1"/>
</dbReference>
<dbReference type="PROSITE" id="PS51608">
    <property type="entry name" value="SAM_MT_UBIE"/>
    <property type="match status" value="1"/>
</dbReference>
<dbReference type="PROSITE" id="PS01183">
    <property type="entry name" value="UBIE_1"/>
    <property type="match status" value="1"/>
</dbReference>
<reference key="1">
    <citation type="journal article" date="2005" name="BMC Genomics">
        <title>Bacterial genome adaptation to niches: divergence of the potential virulence genes in three Burkholderia species of different survival strategies.</title>
        <authorList>
            <person name="Kim H.S."/>
            <person name="Schell M.A."/>
            <person name="Yu Y."/>
            <person name="Ulrich R.L."/>
            <person name="Sarria S.H."/>
            <person name="Nierman W.C."/>
            <person name="DeShazer D."/>
        </authorList>
    </citation>
    <scope>NUCLEOTIDE SEQUENCE [LARGE SCALE GENOMIC DNA]</scope>
    <source>
        <strain>ATCC 700388 / DSM 13276 / CCUG 48851 / CIP 106301 / E264</strain>
    </source>
</reference>
<comment type="function">
    <text evidence="1">Methyltransferase required for the conversion of demethylmenaquinol (DMKH2) to menaquinol (MKH2) and the conversion of 2-polyprenyl-6-methoxy-1,4-benzoquinol (DDMQH2) to 2-polyprenyl-3-methyl-6-methoxy-1,4-benzoquinol (DMQH2).</text>
</comment>
<comment type="catalytic activity">
    <reaction evidence="1">
        <text>a 2-demethylmenaquinol + S-adenosyl-L-methionine = a menaquinol + S-adenosyl-L-homocysteine + H(+)</text>
        <dbReference type="Rhea" id="RHEA:42640"/>
        <dbReference type="Rhea" id="RHEA-COMP:9539"/>
        <dbReference type="Rhea" id="RHEA-COMP:9563"/>
        <dbReference type="ChEBI" id="CHEBI:15378"/>
        <dbReference type="ChEBI" id="CHEBI:18151"/>
        <dbReference type="ChEBI" id="CHEBI:55437"/>
        <dbReference type="ChEBI" id="CHEBI:57856"/>
        <dbReference type="ChEBI" id="CHEBI:59789"/>
        <dbReference type="EC" id="2.1.1.163"/>
    </reaction>
</comment>
<comment type="catalytic activity">
    <reaction evidence="1">
        <text>a 2-methoxy-6-(all-trans-polyprenyl)benzene-1,4-diol + S-adenosyl-L-methionine = a 5-methoxy-2-methyl-3-(all-trans-polyprenyl)benzene-1,4-diol + S-adenosyl-L-homocysteine + H(+)</text>
        <dbReference type="Rhea" id="RHEA:28286"/>
        <dbReference type="Rhea" id="RHEA-COMP:10858"/>
        <dbReference type="Rhea" id="RHEA-COMP:10859"/>
        <dbReference type="ChEBI" id="CHEBI:15378"/>
        <dbReference type="ChEBI" id="CHEBI:57856"/>
        <dbReference type="ChEBI" id="CHEBI:59789"/>
        <dbReference type="ChEBI" id="CHEBI:84166"/>
        <dbReference type="ChEBI" id="CHEBI:84167"/>
        <dbReference type="EC" id="2.1.1.201"/>
    </reaction>
</comment>
<comment type="pathway">
    <text evidence="1">Quinol/quinone metabolism; menaquinone biosynthesis; menaquinol from 1,4-dihydroxy-2-naphthoate: step 2/2.</text>
</comment>
<comment type="pathway">
    <text evidence="1">Cofactor biosynthesis; ubiquinone biosynthesis.</text>
</comment>
<comment type="similarity">
    <text evidence="1">Belongs to the class I-like SAM-binding methyltransferase superfamily. MenG/UbiE family.</text>
</comment>
<gene>
    <name evidence="1" type="primary">ubiE</name>
    <name type="ordered locus">BTH_I0553</name>
</gene>
<proteinExistence type="inferred from homology"/>
<accession>Q2T139</accession>
<evidence type="ECO:0000255" key="1">
    <source>
        <dbReference type="HAMAP-Rule" id="MF_01813"/>
    </source>
</evidence>
<feature type="chain" id="PRO_1000056235" description="Ubiquinone/menaquinone biosynthesis C-methyltransferase UbiE">
    <location>
        <begin position="1"/>
        <end position="243"/>
    </location>
</feature>
<feature type="binding site" evidence="1">
    <location>
        <position position="69"/>
    </location>
    <ligand>
        <name>S-adenosyl-L-methionine</name>
        <dbReference type="ChEBI" id="CHEBI:59789"/>
    </ligand>
</feature>
<feature type="binding site" evidence="1">
    <location>
        <position position="90"/>
    </location>
    <ligand>
        <name>S-adenosyl-L-methionine</name>
        <dbReference type="ChEBI" id="CHEBI:59789"/>
    </ligand>
</feature>
<feature type="binding site" evidence="1">
    <location>
        <begin position="116"/>
        <end position="117"/>
    </location>
    <ligand>
        <name>S-adenosyl-L-methionine</name>
        <dbReference type="ChEBI" id="CHEBI:59789"/>
    </ligand>
</feature>